<feature type="chain" id="PRO_0000271104" description="Coiled-coil domain-containing protein 85A">
    <location>
        <begin position="1"/>
        <end position="553"/>
    </location>
</feature>
<feature type="region of interest" description="Disordered" evidence="3">
    <location>
        <begin position="1"/>
        <end position="37"/>
    </location>
</feature>
<feature type="region of interest" description="Disordered" evidence="3">
    <location>
        <begin position="203"/>
        <end position="414"/>
    </location>
</feature>
<feature type="region of interest" description="Disordered" evidence="3">
    <location>
        <begin position="433"/>
        <end position="461"/>
    </location>
</feature>
<feature type="region of interest" description="Disordered" evidence="3">
    <location>
        <begin position="491"/>
        <end position="518"/>
    </location>
</feature>
<feature type="coiled-coil region" evidence="2">
    <location>
        <begin position="43"/>
        <end position="109"/>
    </location>
</feature>
<feature type="coiled-coil region" evidence="2">
    <location>
        <begin position="137"/>
        <end position="169"/>
    </location>
</feature>
<feature type="coiled-coil region" evidence="2">
    <location>
        <begin position="412"/>
        <end position="443"/>
    </location>
</feature>
<feature type="compositionally biased region" description="Low complexity" evidence="3">
    <location>
        <begin position="1"/>
        <end position="28"/>
    </location>
</feature>
<feature type="compositionally biased region" description="Low complexity" evidence="3">
    <location>
        <begin position="209"/>
        <end position="220"/>
    </location>
</feature>
<feature type="compositionally biased region" description="Basic and acidic residues" evidence="3">
    <location>
        <begin position="236"/>
        <end position="260"/>
    </location>
</feature>
<feature type="compositionally biased region" description="Gly residues" evidence="3">
    <location>
        <begin position="376"/>
        <end position="389"/>
    </location>
</feature>
<feature type="compositionally biased region" description="Basic and acidic residues" evidence="3">
    <location>
        <begin position="391"/>
        <end position="403"/>
    </location>
</feature>
<feature type="compositionally biased region" description="Polar residues" evidence="3">
    <location>
        <begin position="439"/>
        <end position="455"/>
    </location>
</feature>
<feature type="compositionally biased region" description="Low complexity" evidence="3">
    <location>
        <begin position="491"/>
        <end position="508"/>
    </location>
</feature>
<feature type="modified residue" description="Asymmetric dimethylarginine" evidence="1">
    <location>
        <position position="541"/>
    </location>
</feature>
<feature type="sequence conflict" description="In Ref. 1; BAB67805." evidence="5" ref="1">
    <original>P</original>
    <variation>S</variation>
    <location>
        <position position="20"/>
    </location>
</feature>
<protein>
    <recommendedName>
        <fullName>Coiled-coil domain-containing protein 85A</fullName>
    </recommendedName>
</protein>
<reference key="1">
    <citation type="journal article" date="2001" name="DNA Res.">
        <title>Prediction of the coding sequences of unidentified human genes. XXI. The complete sequences of 60 new cDNA clones from brain which code for large proteins.</title>
        <authorList>
            <person name="Nagase T."/>
            <person name="Kikuno R."/>
            <person name="Ohara O."/>
        </authorList>
    </citation>
    <scope>NUCLEOTIDE SEQUENCE [LARGE SCALE MRNA]</scope>
    <source>
        <tissue>Brain</tissue>
    </source>
</reference>
<reference key="2">
    <citation type="journal article" date="2005" name="Nature">
        <title>Generation and annotation of the DNA sequences of human chromosomes 2 and 4.</title>
        <authorList>
            <person name="Hillier L.W."/>
            <person name="Graves T.A."/>
            <person name="Fulton R.S."/>
            <person name="Fulton L.A."/>
            <person name="Pepin K.H."/>
            <person name="Minx P."/>
            <person name="Wagner-McPherson C."/>
            <person name="Layman D."/>
            <person name="Wylie K."/>
            <person name="Sekhon M."/>
            <person name="Becker M.C."/>
            <person name="Fewell G.A."/>
            <person name="Delehaunty K.D."/>
            <person name="Miner T.L."/>
            <person name="Nash W.E."/>
            <person name="Kremitzki C."/>
            <person name="Oddy L."/>
            <person name="Du H."/>
            <person name="Sun H."/>
            <person name="Bradshaw-Cordum H."/>
            <person name="Ali J."/>
            <person name="Carter J."/>
            <person name="Cordes M."/>
            <person name="Harris A."/>
            <person name="Isak A."/>
            <person name="van Brunt A."/>
            <person name="Nguyen C."/>
            <person name="Du F."/>
            <person name="Courtney L."/>
            <person name="Kalicki J."/>
            <person name="Ozersky P."/>
            <person name="Abbott S."/>
            <person name="Armstrong J."/>
            <person name="Belter E.A."/>
            <person name="Caruso L."/>
            <person name="Cedroni M."/>
            <person name="Cotton M."/>
            <person name="Davidson T."/>
            <person name="Desai A."/>
            <person name="Elliott G."/>
            <person name="Erb T."/>
            <person name="Fronick C."/>
            <person name="Gaige T."/>
            <person name="Haakenson W."/>
            <person name="Haglund K."/>
            <person name="Holmes A."/>
            <person name="Harkins R."/>
            <person name="Kim K."/>
            <person name="Kruchowski S.S."/>
            <person name="Strong C.M."/>
            <person name="Grewal N."/>
            <person name="Goyea E."/>
            <person name="Hou S."/>
            <person name="Levy A."/>
            <person name="Martinka S."/>
            <person name="Mead K."/>
            <person name="McLellan M.D."/>
            <person name="Meyer R."/>
            <person name="Randall-Maher J."/>
            <person name="Tomlinson C."/>
            <person name="Dauphin-Kohlberg S."/>
            <person name="Kozlowicz-Reilly A."/>
            <person name="Shah N."/>
            <person name="Swearengen-Shahid S."/>
            <person name="Snider J."/>
            <person name="Strong J.T."/>
            <person name="Thompson J."/>
            <person name="Yoakum M."/>
            <person name="Leonard S."/>
            <person name="Pearman C."/>
            <person name="Trani L."/>
            <person name="Radionenko M."/>
            <person name="Waligorski J.E."/>
            <person name="Wang C."/>
            <person name="Rock S.M."/>
            <person name="Tin-Wollam A.-M."/>
            <person name="Maupin R."/>
            <person name="Latreille P."/>
            <person name="Wendl M.C."/>
            <person name="Yang S.-P."/>
            <person name="Pohl C."/>
            <person name="Wallis J.W."/>
            <person name="Spieth J."/>
            <person name="Bieri T.A."/>
            <person name="Berkowicz N."/>
            <person name="Nelson J.O."/>
            <person name="Osborne J."/>
            <person name="Ding L."/>
            <person name="Meyer R."/>
            <person name="Sabo A."/>
            <person name="Shotland Y."/>
            <person name="Sinha P."/>
            <person name="Wohldmann P.E."/>
            <person name="Cook L.L."/>
            <person name="Hickenbotham M.T."/>
            <person name="Eldred J."/>
            <person name="Williams D."/>
            <person name="Jones T.A."/>
            <person name="She X."/>
            <person name="Ciccarelli F.D."/>
            <person name="Izaurralde E."/>
            <person name="Taylor J."/>
            <person name="Schmutz J."/>
            <person name="Myers R.M."/>
            <person name="Cox D.R."/>
            <person name="Huang X."/>
            <person name="McPherson J.D."/>
            <person name="Mardis E.R."/>
            <person name="Clifton S.W."/>
            <person name="Warren W.C."/>
            <person name="Chinwalla A.T."/>
            <person name="Eddy S.R."/>
            <person name="Marra M.A."/>
            <person name="Ovcharenko I."/>
            <person name="Furey T.S."/>
            <person name="Miller W."/>
            <person name="Eichler E.E."/>
            <person name="Bork P."/>
            <person name="Suyama M."/>
            <person name="Torrents D."/>
            <person name="Waterston R.H."/>
            <person name="Wilson R.K."/>
        </authorList>
    </citation>
    <scope>NUCLEOTIDE SEQUENCE [LARGE SCALE GENOMIC DNA]</scope>
</reference>
<reference key="3">
    <citation type="journal article" date="2014" name="Mol. Biol. Cell">
        <title>DIPA-family coiled-coils bind conserved isoform-specific head domain of p120-catenin family: potential roles in hydrocephalus and heterotopia.</title>
        <authorList>
            <person name="Markham N.O."/>
            <person name="Doll C.A."/>
            <person name="Dohn M.R."/>
            <person name="Miller R.K."/>
            <person name="Yu H."/>
            <person name="Coffey R.J."/>
            <person name="McCrea P.D."/>
            <person name="Gamse J.T."/>
            <person name="Reynolds A.B."/>
        </authorList>
    </citation>
    <scope>FUNCTION</scope>
    <scope>INTERACTION WITH ARVCF; CTNND1; CTNND2 AND PKP4</scope>
    <scope>SUBCELLULAR LOCATION</scope>
</reference>
<gene>
    <name type="primary">CCDC85A</name>
    <name type="synonym">KIAA1912</name>
</gene>
<accession>Q96PX6</accession>
<sequence>MSKAAGGAAAAAAAAESCSPAPAGSSAAPPAPVEDLSKVSDEELLQWSKEELIRSLRRAEAEKVSAMLDHSNLIREVNRRLQLHLGEIRGLKDINQKLQEDNQELRDLCCFLDDDRQKGKRVSREWQRLGRYTAGVMHKEVALYLQKLKDLEVKQEEVVKENMELKELCVLLDEEKGAGCAGSRCSIDSQASLCQLTASTAPYVRDVGDGSSTSSTGSTDSPDHHKHHASSGSPEHLQKPRSEGSPEHSKHRSASPEHPQKPRACGTPDRPKALKGPSPEHHKPLCKGSPEQQRHPHPGSSPETLPKHVLSGSPEHFQKHRSGSSPEHARHSGGSPEHLQKHALGGSLEHLPRARGTSPEHLKQHYGGSPDHKHGGGSGGSGGSGGGSREGTLRRQAQEDGSPHHRNVYSGMNESTLSYVRQLEARVRQLEEENRMLPQASQNRRQPPTRNSSNMEKGWGSRARRVLQWWQGCRGIGRCLPTLPGSFRLSSGADGSNSSPNSAASFSGHATPSQQPEPVVHSLKVVWRKLGDAAGSCPGIRQHLSGNQYKGPM</sequence>
<name>CC85A_HUMAN</name>
<evidence type="ECO:0000250" key="1">
    <source>
        <dbReference type="UniProtKB" id="Q5SP85"/>
    </source>
</evidence>
<evidence type="ECO:0000255" key="2"/>
<evidence type="ECO:0000256" key="3">
    <source>
        <dbReference type="SAM" id="MobiDB-lite"/>
    </source>
</evidence>
<evidence type="ECO:0000269" key="4">
    <source>
    </source>
</evidence>
<evidence type="ECO:0000305" key="5"/>
<evidence type="ECO:0000305" key="6">
    <source>
    </source>
</evidence>
<keyword id="KW-0965">Cell junction</keyword>
<keyword id="KW-0175">Coiled coil</keyword>
<keyword id="KW-0488">Methylation</keyword>
<keyword id="KW-1267">Proteomics identification</keyword>
<keyword id="KW-1185">Reference proteome</keyword>
<proteinExistence type="evidence at protein level"/>
<comment type="function">
    <text evidence="6">May play a role in cell-cell adhesion and epithelium development through its interaction with proteins of the beta-catenin family.</text>
</comment>
<comment type="subunit">
    <text evidence="6">May interact with ARVCF; CTNND1; CTNND2 and PKP4.</text>
</comment>
<comment type="interaction">
    <interactant intactId="EBI-7257229">
        <id>Q96PX6</id>
    </interactant>
    <interactant intactId="EBI-12243980">
        <id>Q8TDW5-2</id>
        <label>SYTL5</label>
    </interactant>
    <organismsDiffer>false</organismsDiffer>
    <experiments>3</experiments>
</comment>
<comment type="interaction">
    <interactant intactId="EBI-7257229">
        <id>Q96PX6</id>
    </interactant>
    <interactant intactId="EBI-11952721">
        <id>Q05BL1</id>
        <label>TP53BP2</label>
    </interactant>
    <organismsDiffer>false</organismsDiffer>
    <experiments>4</experiments>
</comment>
<comment type="subcellular location">
    <subcellularLocation>
        <location evidence="4">Cell junction</location>
        <location evidence="4">Adherens junction</location>
    </subcellularLocation>
</comment>
<comment type="similarity">
    <text evidence="5">Belongs to the CCDC85 family.</text>
</comment>
<comment type="sequence caution" evidence="5">
    <conflict type="erroneous initiation">
        <sequence resource="EMBL-CDS" id="BAB67805"/>
    </conflict>
    <text>Extended N-terminus.</text>
</comment>
<organism>
    <name type="scientific">Homo sapiens</name>
    <name type="common">Human</name>
    <dbReference type="NCBI Taxonomy" id="9606"/>
    <lineage>
        <taxon>Eukaryota</taxon>
        <taxon>Metazoa</taxon>
        <taxon>Chordata</taxon>
        <taxon>Craniata</taxon>
        <taxon>Vertebrata</taxon>
        <taxon>Euteleostomi</taxon>
        <taxon>Mammalia</taxon>
        <taxon>Eutheria</taxon>
        <taxon>Euarchontoglires</taxon>
        <taxon>Primates</taxon>
        <taxon>Haplorrhini</taxon>
        <taxon>Catarrhini</taxon>
        <taxon>Hominidae</taxon>
        <taxon>Homo</taxon>
    </lineage>
</organism>
<dbReference type="EMBL" id="AB067499">
    <property type="protein sequence ID" value="BAB67805.1"/>
    <property type="status" value="ALT_INIT"/>
    <property type="molecule type" value="mRNA"/>
</dbReference>
<dbReference type="EMBL" id="AC007743">
    <property type="status" value="NOT_ANNOTATED_CDS"/>
    <property type="molecule type" value="Genomic_DNA"/>
</dbReference>
<dbReference type="EMBL" id="AC007744">
    <property type="status" value="NOT_ANNOTATED_CDS"/>
    <property type="molecule type" value="Genomic_DNA"/>
</dbReference>
<dbReference type="CCDS" id="CCDS46290.1"/>
<dbReference type="RefSeq" id="NP_001073902.1">
    <property type="nucleotide sequence ID" value="NM_001080433.2"/>
</dbReference>
<dbReference type="SMR" id="Q96PX6"/>
<dbReference type="BioGRID" id="125361">
    <property type="interactions" value="69"/>
</dbReference>
<dbReference type="FunCoup" id="Q96PX6">
    <property type="interactions" value="42"/>
</dbReference>
<dbReference type="IntAct" id="Q96PX6">
    <property type="interactions" value="63"/>
</dbReference>
<dbReference type="MINT" id="Q96PX6"/>
<dbReference type="STRING" id="9606.ENSP00000384040"/>
<dbReference type="iPTMnet" id="Q96PX6"/>
<dbReference type="PhosphoSitePlus" id="Q96PX6"/>
<dbReference type="BioMuta" id="CCDC85A"/>
<dbReference type="DMDM" id="296439418"/>
<dbReference type="jPOST" id="Q96PX6"/>
<dbReference type="MassIVE" id="Q96PX6"/>
<dbReference type="PaxDb" id="9606-ENSP00000384040"/>
<dbReference type="PeptideAtlas" id="Q96PX6"/>
<dbReference type="ProteomicsDB" id="77782"/>
<dbReference type="Antibodypedia" id="50392">
    <property type="antibodies" value="31 antibodies from 11 providers"/>
</dbReference>
<dbReference type="DNASU" id="114800"/>
<dbReference type="Ensembl" id="ENST00000407595.3">
    <property type="protein sequence ID" value="ENSP00000384040.2"/>
    <property type="gene ID" value="ENSG00000055813.6"/>
</dbReference>
<dbReference type="GeneID" id="114800"/>
<dbReference type="KEGG" id="hsa:114800"/>
<dbReference type="MANE-Select" id="ENST00000407595.3">
    <property type="protein sequence ID" value="ENSP00000384040.2"/>
    <property type="RefSeq nucleotide sequence ID" value="NM_001080433.2"/>
    <property type="RefSeq protein sequence ID" value="NP_001073902.1"/>
</dbReference>
<dbReference type="UCSC" id="uc002rzn.4">
    <property type="organism name" value="human"/>
</dbReference>
<dbReference type="AGR" id="HGNC:29400"/>
<dbReference type="CTD" id="114800"/>
<dbReference type="DisGeNET" id="114800"/>
<dbReference type="GeneCards" id="CCDC85A"/>
<dbReference type="HGNC" id="HGNC:29400">
    <property type="gene designation" value="CCDC85A"/>
</dbReference>
<dbReference type="HPA" id="ENSG00000055813">
    <property type="expression patterns" value="Tissue enhanced (adipose tissue, brain)"/>
</dbReference>
<dbReference type="neXtProt" id="NX_Q96PX6"/>
<dbReference type="OpenTargets" id="ENSG00000055813"/>
<dbReference type="PharmGKB" id="PA144596452"/>
<dbReference type="VEuPathDB" id="HostDB:ENSG00000055813"/>
<dbReference type="eggNOG" id="KOG3819">
    <property type="taxonomic scope" value="Eukaryota"/>
</dbReference>
<dbReference type="GeneTree" id="ENSGT00940000157361"/>
<dbReference type="HOGENOM" id="CLU_028762_1_1_1"/>
<dbReference type="InParanoid" id="Q96PX6"/>
<dbReference type="OMA" id="DGNVCSP"/>
<dbReference type="OrthoDB" id="10056395at2759"/>
<dbReference type="PAN-GO" id="Q96PX6">
    <property type="GO annotations" value="0 GO annotations based on evolutionary models"/>
</dbReference>
<dbReference type="PhylomeDB" id="Q96PX6"/>
<dbReference type="TreeFam" id="TF320243"/>
<dbReference type="PathwayCommons" id="Q96PX6"/>
<dbReference type="SignaLink" id="Q96PX6"/>
<dbReference type="BioGRID-ORCS" id="114800">
    <property type="hits" value="12 hits in 1147 CRISPR screens"/>
</dbReference>
<dbReference type="ChiTaRS" id="CCDC85A">
    <property type="organism name" value="human"/>
</dbReference>
<dbReference type="GenomeRNAi" id="114800"/>
<dbReference type="Pharos" id="Q96PX6">
    <property type="development level" value="Tdark"/>
</dbReference>
<dbReference type="PRO" id="PR:Q96PX6"/>
<dbReference type="Proteomes" id="UP000005640">
    <property type="component" value="Chromosome 2"/>
</dbReference>
<dbReference type="RNAct" id="Q96PX6">
    <property type="molecule type" value="protein"/>
</dbReference>
<dbReference type="Bgee" id="ENSG00000055813">
    <property type="expression patterns" value="Expressed in prefrontal cortex and 111 other cell types or tissues"/>
</dbReference>
<dbReference type="GO" id="GO:0005912">
    <property type="term" value="C:adherens junction"/>
    <property type="evidence" value="ECO:0000314"/>
    <property type="project" value="UniProtKB"/>
</dbReference>
<dbReference type="InterPro" id="IPR019359">
    <property type="entry name" value="CCDC85"/>
</dbReference>
<dbReference type="PANTHER" id="PTHR13546:SF13">
    <property type="entry name" value="COILED-COIL DOMAIN-CONTAINING PROTEIN 85A"/>
    <property type="match status" value="1"/>
</dbReference>
<dbReference type="PANTHER" id="PTHR13546">
    <property type="entry name" value="RE60986P"/>
    <property type="match status" value="1"/>
</dbReference>
<dbReference type="Pfam" id="PF10226">
    <property type="entry name" value="CCDC85"/>
    <property type="match status" value="1"/>
</dbReference>